<keyword id="KW-0997">Cell inner membrane</keyword>
<keyword id="KW-1003">Cell membrane</keyword>
<keyword id="KW-0350">Heme biosynthesis</keyword>
<keyword id="KW-0472">Membrane</keyword>
<keyword id="KW-0808">Transferase</keyword>
<keyword id="KW-0812">Transmembrane</keyword>
<keyword id="KW-1133">Transmembrane helix</keyword>
<name>COXX_MICAN</name>
<comment type="function">
    <text evidence="1">Converts heme B (protoheme IX) to heme O by substitution of the vinyl group on carbon 2 of heme B porphyrin ring with a hydroxyethyl farnesyl side group.</text>
</comment>
<comment type="catalytic activity">
    <reaction evidence="1">
        <text>heme b + (2E,6E)-farnesyl diphosphate + H2O = Fe(II)-heme o + diphosphate</text>
        <dbReference type="Rhea" id="RHEA:28070"/>
        <dbReference type="ChEBI" id="CHEBI:15377"/>
        <dbReference type="ChEBI" id="CHEBI:33019"/>
        <dbReference type="ChEBI" id="CHEBI:60344"/>
        <dbReference type="ChEBI" id="CHEBI:60530"/>
        <dbReference type="ChEBI" id="CHEBI:175763"/>
        <dbReference type="EC" id="2.5.1.141"/>
    </reaction>
</comment>
<comment type="pathway">
    <text evidence="1">Porphyrin-containing compound metabolism; heme O biosynthesis; heme O from protoheme: step 1/1.</text>
</comment>
<comment type="subcellular location">
    <subcellularLocation>
        <location evidence="1">Cell inner membrane</location>
        <topology evidence="1">Multi-pass membrane protein</topology>
    </subcellularLocation>
</comment>
<comment type="miscellaneous">
    <text evidence="1">Carbon 2 of the heme B porphyrin ring is defined according to the Fischer nomenclature.</text>
</comment>
<comment type="similarity">
    <text evidence="1">Belongs to the UbiA prenyltransferase family. Protoheme IX farnesyltransferase subfamily.</text>
</comment>
<organism>
    <name type="scientific">Microcystis aeruginosa (strain NIES-843 / IAM M-2473)</name>
    <dbReference type="NCBI Taxonomy" id="449447"/>
    <lineage>
        <taxon>Bacteria</taxon>
        <taxon>Bacillati</taxon>
        <taxon>Cyanobacteriota</taxon>
        <taxon>Cyanophyceae</taxon>
        <taxon>Oscillatoriophycideae</taxon>
        <taxon>Chroococcales</taxon>
        <taxon>Microcystaceae</taxon>
        <taxon>Microcystis</taxon>
    </lineage>
</organism>
<proteinExistence type="inferred from homology"/>
<sequence>MTGTQALRHHDNFLQVAKSYYQLTKPRIIPLLLITTAAAMEIASKGQVSPLLLFLTLLGGTLAAAAAQTLNCIYDRDIDHTMLRTRARPIPSGRVQPLHALIFALVLASLSLALFVFFVNTLSGFLAMTGIAFYMLIYTHLLKRHSIQNIVIGGAAGSIPPLVGWAAVTGDLGWIPWILFAIIFLWTPPHFWALALMIKDDYAEVDIPMMPVVKGEEATSEQIWLYTLIVVPFTFLLIYPLAACGVVYGVAALVLGFVFLKKAWRLKQNPFDRDIARSLFKYSILYMMLLCTAMVIDSLPMTSHLIATIASLFSCS</sequence>
<feature type="chain" id="PRO_0000346060" description="Protoheme IX farnesyltransferase">
    <location>
        <begin position="1"/>
        <end position="316"/>
    </location>
</feature>
<feature type="transmembrane region" description="Helical" evidence="1">
    <location>
        <begin position="28"/>
        <end position="48"/>
    </location>
</feature>
<feature type="transmembrane region" description="Helical" evidence="1">
    <location>
        <begin position="50"/>
        <end position="70"/>
    </location>
</feature>
<feature type="transmembrane region" description="Helical" evidence="1">
    <location>
        <begin position="99"/>
        <end position="119"/>
    </location>
</feature>
<feature type="transmembrane region" description="Helical" evidence="1">
    <location>
        <begin position="122"/>
        <end position="142"/>
    </location>
</feature>
<feature type="transmembrane region" description="Helical" evidence="1">
    <location>
        <begin position="150"/>
        <end position="170"/>
    </location>
</feature>
<feature type="transmembrane region" description="Helical" evidence="1">
    <location>
        <begin position="178"/>
        <end position="198"/>
    </location>
</feature>
<feature type="transmembrane region" description="Helical" evidence="1">
    <location>
        <begin position="223"/>
        <end position="243"/>
    </location>
</feature>
<feature type="transmembrane region" description="Helical" evidence="1">
    <location>
        <begin position="244"/>
        <end position="264"/>
    </location>
</feature>
<feature type="transmembrane region" description="Helical" evidence="1">
    <location>
        <begin position="293"/>
        <end position="313"/>
    </location>
</feature>
<accession>B0JGA8</accession>
<reference key="1">
    <citation type="journal article" date="2007" name="DNA Res.">
        <title>Complete genomic structure of the bloom-forming toxic cyanobacterium Microcystis aeruginosa NIES-843.</title>
        <authorList>
            <person name="Kaneko T."/>
            <person name="Nakajima N."/>
            <person name="Okamoto S."/>
            <person name="Suzuki I."/>
            <person name="Tanabe Y."/>
            <person name="Tamaoki M."/>
            <person name="Nakamura Y."/>
            <person name="Kasai F."/>
            <person name="Watanabe A."/>
            <person name="Kawashima K."/>
            <person name="Kishida Y."/>
            <person name="Ono A."/>
            <person name="Shimizu Y."/>
            <person name="Takahashi C."/>
            <person name="Minami C."/>
            <person name="Fujishiro T."/>
            <person name="Kohara M."/>
            <person name="Katoh M."/>
            <person name="Nakazaki N."/>
            <person name="Nakayama S."/>
            <person name="Yamada M."/>
            <person name="Tabata S."/>
            <person name="Watanabe M.M."/>
        </authorList>
    </citation>
    <scope>NUCLEOTIDE SEQUENCE [LARGE SCALE GENOMIC DNA]</scope>
    <source>
        <strain>NIES-843 / IAM M-247</strain>
    </source>
</reference>
<evidence type="ECO:0000255" key="1">
    <source>
        <dbReference type="HAMAP-Rule" id="MF_00154"/>
    </source>
</evidence>
<protein>
    <recommendedName>
        <fullName evidence="1">Protoheme IX farnesyltransferase</fullName>
        <ecNumber evidence="1">2.5.1.141</ecNumber>
    </recommendedName>
    <alternativeName>
        <fullName evidence="1">Heme B farnesyltransferase</fullName>
    </alternativeName>
    <alternativeName>
        <fullName evidence="1">Heme O synthase</fullName>
    </alternativeName>
</protein>
<gene>
    <name evidence="1" type="primary">ctaB</name>
    <name type="ordered locus">MAE_22910</name>
</gene>
<dbReference type="EC" id="2.5.1.141" evidence="1"/>
<dbReference type="EMBL" id="AP009552">
    <property type="protein sequence ID" value="BAG02113.1"/>
    <property type="molecule type" value="Genomic_DNA"/>
</dbReference>
<dbReference type="RefSeq" id="WP_002796806.1">
    <property type="nucleotide sequence ID" value="NC_010296.1"/>
</dbReference>
<dbReference type="SMR" id="B0JGA8"/>
<dbReference type="STRING" id="449447.MAE_22910"/>
<dbReference type="PaxDb" id="449447-MAE_22910"/>
<dbReference type="EnsemblBacteria" id="BAG02113">
    <property type="protein sequence ID" value="BAG02113"/>
    <property type="gene ID" value="MAE_22910"/>
</dbReference>
<dbReference type="KEGG" id="mar:MAE_22910"/>
<dbReference type="eggNOG" id="COG0109">
    <property type="taxonomic scope" value="Bacteria"/>
</dbReference>
<dbReference type="HOGENOM" id="CLU_029631_0_2_3"/>
<dbReference type="BioCyc" id="MAER449447:MAE_RS09985-MONOMER"/>
<dbReference type="UniPathway" id="UPA00834">
    <property type="reaction ID" value="UER00712"/>
</dbReference>
<dbReference type="Proteomes" id="UP000001510">
    <property type="component" value="Chromosome"/>
</dbReference>
<dbReference type="GO" id="GO:0005886">
    <property type="term" value="C:plasma membrane"/>
    <property type="evidence" value="ECO:0007669"/>
    <property type="project" value="UniProtKB-SubCell"/>
</dbReference>
<dbReference type="GO" id="GO:0008495">
    <property type="term" value="F:protoheme IX farnesyltransferase activity"/>
    <property type="evidence" value="ECO:0007669"/>
    <property type="project" value="UniProtKB-UniRule"/>
</dbReference>
<dbReference type="GO" id="GO:0048034">
    <property type="term" value="P:heme O biosynthetic process"/>
    <property type="evidence" value="ECO:0007669"/>
    <property type="project" value="UniProtKB-UniRule"/>
</dbReference>
<dbReference type="CDD" id="cd13957">
    <property type="entry name" value="PT_UbiA_Cox10"/>
    <property type="match status" value="1"/>
</dbReference>
<dbReference type="FunFam" id="1.10.357.140:FF:000001">
    <property type="entry name" value="Protoheme IX farnesyltransferase"/>
    <property type="match status" value="1"/>
</dbReference>
<dbReference type="Gene3D" id="1.10.357.140">
    <property type="entry name" value="UbiA prenyltransferase"/>
    <property type="match status" value="1"/>
</dbReference>
<dbReference type="HAMAP" id="MF_00154">
    <property type="entry name" value="CyoE_CtaB"/>
    <property type="match status" value="1"/>
</dbReference>
<dbReference type="InterPro" id="IPR006369">
    <property type="entry name" value="Protohaem_IX_farnesylTrfase"/>
</dbReference>
<dbReference type="InterPro" id="IPR000537">
    <property type="entry name" value="UbiA_prenyltransferase"/>
</dbReference>
<dbReference type="InterPro" id="IPR030470">
    <property type="entry name" value="UbiA_prenylTrfase_CS"/>
</dbReference>
<dbReference type="InterPro" id="IPR044878">
    <property type="entry name" value="UbiA_sf"/>
</dbReference>
<dbReference type="NCBIfam" id="TIGR01473">
    <property type="entry name" value="cyoE_ctaB"/>
    <property type="match status" value="1"/>
</dbReference>
<dbReference type="NCBIfam" id="NF003349">
    <property type="entry name" value="PRK04375.1-2"/>
    <property type="match status" value="1"/>
</dbReference>
<dbReference type="PANTHER" id="PTHR43448:SF7">
    <property type="entry name" value="4-HYDROXYBENZOATE SOLANESYLTRANSFERASE"/>
    <property type="match status" value="1"/>
</dbReference>
<dbReference type="PANTHER" id="PTHR43448">
    <property type="entry name" value="PROTOHEME IX FARNESYLTRANSFERASE, MITOCHONDRIAL"/>
    <property type="match status" value="1"/>
</dbReference>
<dbReference type="Pfam" id="PF01040">
    <property type="entry name" value="UbiA"/>
    <property type="match status" value="1"/>
</dbReference>
<dbReference type="PROSITE" id="PS00943">
    <property type="entry name" value="UBIA"/>
    <property type="match status" value="1"/>
</dbReference>